<name>NCAP_HIRRV</name>
<organismHost>
    <name type="scientific">Acanthopagrus schlegelii</name>
    <name type="common">Black porgy</name>
    <dbReference type="NCBI Taxonomy" id="72011"/>
</organismHost>
<organismHost>
    <name type="scientific">Paralichthys olivaceus</name>
    <name type="common">Bastard halibut</name>
    <name type="synonym">Hippoglossus olivaceus</name>
    <dbReference type="NCBI Taxonomy" id="8255"/>
</organismHost>
<organismHost>
    <name type="scientific">Plecoglossus altivelis</name>
    <name type="common">Ayu</name>
    <dbReference type="NCBI Taxonomy" id="61084"/>
</organismHost>
<organismHost>
    <name type="scientific">Sebastes inermis</name>
    <name type="common">Dark-banded rockfish</name>
    <dbReference type="NCBI Taxonomy" id="160818"/>
</organismHost>
<feature type="chain" id="PRO_0000297610" description="Nucleoprotein">
    <location>
        <begin position="1"/>
        <end position="392"/>
    </location>
</feature>
<feature type="region of interest" description="Disordered" evidence="2">
    <location>
        <begin position="345"/>
        <end position="392"/>
    </location>
</feature>
<feature type="compositionally biased region" description="Acidic residues" evidence="2">
    <location>
        <begin position="365"/>
        <end position="392"/>
    </location>
</feature>
<protein>
    <recommendedName>
        <fullName>Nucleoprotein</fullName>
        <shortName>NP</shortName>
    </recommendedName>
    <alternativeName>
        <fullName>Nucleocapsid protein</fullName>
        <shortName>Protein N</shortName>
    </alternativeName>
</protein>
<reference key="1">
    <citation type="journal article" date="2005" name="Virus Res.">
        <title>Complete nucleotide sequence of the hirame rhabdovirus, a pathogen of marine fish.</title>
        <authorList>
            <person name="Kim D.H."/>
            <person name="Oh H.K."/>
            <person name="Eou J.I."/>
            <person name="Seo H.J."/>
            <person name="Kim S.K."/>
            <person name="Oh M.J."/>
            <person name="Nam S.W."/>
            <person name="Choi T.J."/>
        </authorList>
    </citation>
    <scope>NUCLEOTIDE SEQUENCE [GENOMIC RNA]</scope>
</reference>
<reference key="2">
    <citation type="submission" date="1995-02" db="EMBL/GenBank/DDBJ databases">
        <authorList>
            <person name="Nishizawa T."/>
        </authorList>
    </citation>
    <scope>NUCLEOTIDE SEQUENCE [GENOMIC RNA] OF 144-392</scope>
    <source>
        <strain>8401-H</strain>
    </source>
</reference>
<accession>Q9QL89</accession>
<accession>Q82036</accession>
<evidence type="ECO:0000250" key="1"/>
<evidence type="ECO:0000256" key="2">
    <source>
        <dbReference type="SAM" id="MobiDB-lite"/>
    </source>
</evidence>
<evidence type="ECO:0000305" key="3"/>
<sequence length="392" mass="42466">MANLKEEFAGLRGVKGGALEDSGTEYDPTKINLTLYGTDKLYTLAIIKRAVSQVGGSQTNKALGILCAFVTSENNPDMTDAAVKLLVDMRFKVDVVPVDDRLGDNLDDPNSKLAEVLTEENMVDLVKGLLFTCALMVKYDVDKMATYCQQKLERLANSQGLNELTLISTSRAVLARIGAAVRPGQKLTKAIYGIILINLMDPATAARAKALCAMRLSGTGMTMVGLFNQASKNLGAPPADLLEDLCMKSIIDSARRIVKLMRIVADVEDMTAKYAIMMSRMLGDGYFKSYGINENSRITCILMNINEQYDEGTTGGLAGVRVSPPFRKLATEIARLLVKKYDGNGSAGPGASDLVRQAEQAAQETEGEDDKYDEEGEEDGGEGEGGEDEEYY</sequence>
<gene>
    <name type="primary">N</name>
</gene>
<proteinExistence type="inferred from homology"/>
<comment type="function">
    <text evidence="1">Encapsidates the genome, protecting it from nucleases. If expressed without protein P it binds non-specifically RNA and therefore can bind it's own mRNA. Interaction with protein P abolishes any non-specific RNA binding, and prevents phosphorylation. The soluble N-P complex encapsidates specifically the genomic RNA, with protein N protecting the genome like a pearl necklace. The encapsidated genomic RNA is termed the nucleocapsid (NC) and serves as template for viral transcription and replication. Protein N binds protein P in the NC through a different interaction, and can be phosphorylated. Subsequent viral replication is dependent on intracellular concentration of newly synthesized protein N. During replication, encapsidation by protein N is coupled to RNA synthesis and all replicative products are resistant to nucleases (By similarity).</text>
</comment>
<comment type="subunit">
    <text evidence="1">Homomultimerizes to form the nucleocapsid. Binds to viral genomic RNA (By similarity).</text>
</comment>
<comment type="subcellular location">
    <subcellularLocation>
        <location>Virion</location>
    </subcellularLocation>
    <subcellularLocation>
        <location evidence="1">Host cytoplasm</location>
    </subcellularLocation>
</comment>
<comment type="similarity">
    <text evidence="3">Belongs to the novirhabdovirus nucleocapsid protein family.</text>
</comment>
<dbReference type="EMBL" id="D45422">
    <property type="protein sequence ID" value="BAA08261.1"/>
    <property type="molecule type" value="Genomic_RNA"/>
</dbReference>
<dbReference type="EMBL" id="AF104985">
    <property type="protein sequence ID" value="AAF14116.1"/>
    <property type="molecule type" value="Genomic_RNA"/>
</dbReference>
<dbReference type="KEGG" id="vg:2559538"/>
<dbReference type="Proteomes" id="UP000008118">
    <property type="component" value="Segment"/>
</dbReference>
<dbReference type="GO" id="GO:0019029">
    <property type="term" value="C:helical viral capsid"/>
    <property type="evidence" value="ECO:0007669"/>
    <property type="project" value="UniProtKB-KW"/>
</dbReference>
<dbReference type="GO" id="GO:0030430">
    <property type="term" value="C:host cell cytoplasm"/>
    <property type="evidence" value="ECO:0007669"/>
    <property type="project" value="UniProtKB-SubCell"/>
</dbReference>
<dbReference type="GO" id="GO:1990904">
    <property type="term" value="C:ribonucleoprotein complex"/>
    <property type="evidence" value="ECO:0007669"/>
    <property type="project" value="UniProtKB-KW"/>
</dbReference>
<dbReference type="GO" id="GO:0019013">
    <property type="term" value="C:viral nucleocapsid"/>
    <property type="evidence" value="ECO:0007669"/>
    <property type="project" value="UniProtKB-KW"/>
</dbReference>
<dbReference type="GO" id="GO:0003723">
    <property type="term" value="F:RNA binding"/>
    <property type="evidence" value="ECO:0007669"/>
    <property type="project" value="UniProtKB-KW"/>
</dbReference>
<dbReference type="InterPro" id="IPR004902">
    <property type="entry name" value="Rhabdo_ncap_2"/>
</dbReference>
<dbReference type="Pfam" id="PF03216">
    <property type="entry name" value="Rhabdo_ncap_2"/>
    <property type="match status" value="1"/>
</dbReference>
<organism>
    <name type="scientific">Hirame rhabdovirus (strain Korea/CA 9703/1997)</name>
    <name type="common">HIRRV</name>
    <dbReference type="NCBI Taxonomy" id="453457"/>
    <lineage>
        <taxon>Viruses</taxon>
        <taxon>Riboviria</taxon>
        <taxon>Orthornavirae</taxon>
        <taxon>Negarnaviricota</taxon>
        <taxon>Haploviricotina</taxon>
        <taxon>Monjiviricetes</taxon>
        <taxon>Mononegavirales</taxon>
        <taxon>Rhabdoviridae</taxon>
        <taxon>Gammarhabdovirinae</taxon>
        <taxon>Novirhabdovirus</taxon>
        <taxon>Novirhabdovirus hirame</taxon>
    </lineage>
</organism>
<keyword id="KW-0167">Capsid protein</keyword>
<keyword id="KW-1139">Helical capsid protein</keyword>
<keyword id="KW-1035">Host cytoplasm</keyword>
<keyword id="KW-0597">Phosphoprotein</keyword>
<keyword id="KW-0687">Ribonucleoprotein</keyword>
<keyword id="KW-0694">RNA-binding</keyword>
<keyword id="KW-0543">Viral nucleoprotein</keyword>
<keyword id="KW-0946">Virion</keyword>